<feature type="chain" id="PRO_0000176440" description="Asparagine--tRNA ligase">
    <location>
        <begin position="1"/>
        <end position="466"/>
    </location>
</feature>
<keyword id="KW-0030">Aminoacyl-tRNA synthetase</keyword>
<keyword id="KW-0067">ATP-binding</keyword>
<keyword id="KW-0963">Cytoplasm</keyword>
<keyword id="KW-0436">Ligase</keyword>
<keyword id="KW-0547">Nucleotide-binding</keyword>
<keyword id="KW-0648">Protein biosynthesis</keyword>
<keyword id="KW-1185">Reference proteome</keyword>
<name>SYN_PHOPR</name>
<comment type="catalytic activity">
    <reaction evidence="1">
        <text>tRNA(Asn) + L-asparagine + ATP = L-asparaginyl-tRNA(Asn) + AMP + diphosphate + H(+)</text>
        <dbReference type="Rhea" id="RHEA:11180"/>
        <dbReference type="Rhea" id="RHEA-COMP:9659"/>
        <dbReference type="Rhea" id="RHEA-COMP:9674"/>
        <dbReference type="ChEBI" id="CHEBI:15378"/>
        <dbReference type="ChEBI" id="CHEBI:30616"/>
        <dbReference type="ChEBI" id="CHEBI:33019"/>
        <dbReference type="ChEBI" id="CHEBI:58048"/>
        <dbReference type="ChEBI" id="CHEBI:78442"/>
        <dbReference type="ChEBI" id="CHEBI:78515"/>
        <dbReference type="ChEBI" id="CHEBI:456215"/>
        <dbReference type="EC" id="6.1.1.22"/>
    </reaction>
</comment>
<comment type="subunit">
    <text evidence="1">Homodimer.</text>
</comment>
<comment type="subcellular location">
    <subcellularLocation>
        <location evidence="1">Cytoplasm</location>
    </subcellularLocation>
</comment>
<comment type="similarity">
    <text evidence="1">Belongs to the class-II aminoacyl-tRNA synthetase family.</text>
</comment>
<proteinExistence type="inferred from homology"/>
<dbReference type="EC" id="6.1.1.22" evidence="1"/>
<dbReference type="EMBL" id="CR378670">
    <property type="protein sequence ID" value="CAG20720.1"/>
    <property type="molecule type" value="Genomic_DNA"/>
</dbReference>
<dbReference type="RefSeq" id="WP_011219008.1">
    <property type="nucleotide sequence ID" value="NC_006370.1"/>
</dbReference>
<dbReference type="SMR" id="Q6LPQ6"/>
<dbReference type="STRING" id="298386.PBPRA2335"/>
<dbReference type="KEGG" id="ppr:PBPRA2335"/>
<dbReference type="eggNOG" id="COG0017">
    <property type="taxonomic scope" value="Bacteria"/>
</dbReference>
<dbReference type="HOGENOM" id="CLU_004553_2_0_6"/>
<dbReference type="Proteomes" id="UP000000593">
    <property type="component" value="Chromosome 1"/>
</dbReference>
<dbReference type="GO" id="GO:0005737">
    <property type="term" value="C:cytoplasm"/>
    <property type="evidence" value="ECO:0007669"/>
    <property type="project" value="UniProtKB-SubCell"/>
</dbReference>
<dbReference type="GO" id="GO:0004816">
    <property type="term" value="F:asparagine-tRNA ligase activity"/>
    <property type="evidence" value="ECO:0007669"/>
    <property type="project" value="UniProtKB-UniRule"/>
</dbReference>
<dbReference type="GO" id="GO:0005524">
    <property type="term" value="F:ATP binding"/>
    <property type="evidence" value="ECO:0007669"/>
    <property type="project" value="UniProtKB-UniRule"/>
</dbReference>
<dbReference type="GO" id="GO:0003676">
    <property type="term" value="F:nucleic acid binding"/>
    <property type="evidence" value="ECO:0007669"/>
    <property type="project" value="InterPro"/>
</dbReference>
<dbReference type="GO" id="GO:0006421">
    <property type="term" value="P:asparaginyl-tRNA aminoacylation"/>
    <property type="evidence" value="ECO:0007669"/>
    <property type="project" value="UniProtKB-UniRule"/>
</dbReference>
<dbReference type="CDD" id="cd00776">
    <property type="entry name" value="AsxRS_core"/>
    <property type="match status" value="1"/>
</dbReference>
<dbReference type="CDD" id="cd04318">
    <property type="entry name" value="EcAsnRS_like_N"/>
    <property type="match status" value="1"/>
</dbReference>
<dbReference type="FunFam" id="3.30.930.10:FF:000016">
    <property type="entry name" value="Asparagine--tRNA ligase"/>
    <property type="match status" value="1"/>
</dbReference>
<dbReference type="Gene3D" id="3.30.930.10">
    <property type="entry name" value="Bira Bifunctional Protein, Domain 2"/>
    <property type="match status" value="1"/>
</dbReference>
<dbReference type="Gene3D" id="2.40.50.140">
    <property type="entry name" value="Nucleic acid-binding proteins"/>
    <property type="match status" value="1"/>
</dbReference>
<dbReference type="HAMAP" id="MF_00534">
    <property type="entry name" value="Asn_tRNA_synth"/>
    <property type="match status" value="1"/>
</dbReference>
<dbReference type="InterPro" id="IPR004364">
    <property type="entry name" value="Aa-tRNA-synt_II"/>
</dbReference>
<dbReference type="InterPro" id="IPR006195">
    <property type="entry name" value="aa-tRNA-synth_II"/>
</dbReference>
<dbReference type="InterPro" id="IPR045864">
    <property type="entry name" value="aa-tRNA-synth_II/BPL/LPL"/>
</dbReference>
<dbReference type="InterPro" id="IPR004522">
    <property type="entry name" value="Asn-tRNA-ligase"/>
</dbReference>
<dbReference type="InterPro" id="IPR002312">
    <property type="entry name" value="Asp/Asn-tRNA-synth_IIb"/>
</dbReference>
<dbReference type="InterPro" id="IPR012340">
    <property type="entry name" value="NA-bd_OB-fold"/>
</dbReference>
<dbReference type="InterPro" id="IPR004365">
    <property type="entry name" value="NA-bd_OB_tRNA"/>
</dbReference>
<dbReference type="NCBIfam" id="TIGR00457">
    <property type="entry name" value="asnS"/>
    <property type="match status" value="1"/>
</dbReference>
<dbReference type="NCBIfam" id="NF003037">
    <property type="entry name" value="PRK03932.1"/>
    <property type="match status" value="1"/>
</dbReference>
<dbReference type="PANTHER" id="PTHR22594:SF34">
    <property type="entry name" value="ASPARAGINE--TRNA LIGASE, MITOCHONDRIAL-RELATED"/>
    <property type="match status" value="1"/>
</dbReference>
<dbReference type="PANTHER" id="PTHR22594">
    <property type="entry name" value="ASPARTYL/LYSYL-TRNA SYNTHETASE"/>
    <property type="match status" value="1"/>
</dbReference>
<dbReference type="Pfam" id="PF00152">
    <property type="entry name" value="tRNA-synt_2"/>
    <property type="match status" value="1"/>
</dbReference>
<dbReference type="Pfam" id="PF01336">
    <property type="entry name" value="tRNA_anti-codon"/>
    <property type="match status" value="1"/>
</dbReference>
<dbReference type="PRINTS" id="PR01042">
    <property type="entry name" value="TRNASYNTHASP"/>
</dbReference>
<dbReference type="SUPFAM" id="SSF55681">
    <property type="entry name" value="Class II aaRS and biotin synthetases"/>
    <property type="match status" value="1"/>
</dbReference>
<dbReference type="SUPFAM" id="SSF50249">
    <property type="entry name" value="Nucleic acid-binding proteins"/>
    <property type="match status" value="1"/>
</dbReference>
<dbReference type="PROSITE" id="PS50862">
    <property type="entry name" value="AA_TRNA_LIGASE_II"/>
    <property type="match status" value="1"/>
</dbReference>
<reference key="1">
    <citation type="journal article" date="2005" name="Science">
        <title>Life at depth: Photobacterium profundum genome sequence and expression analysis.</title>
        <authorList>
            <person name="Vezzi A."/>
            <person name="Campanaro S."/>
            <person name="D'Angelo M."/>
            <person name="Simonato F."/>
            <person name="Vitulo N."/>
            <person name="Lauro F.M."/>
            <person name="Cestaro A."/>
            <person name="Malacrida G."/>
            <person name="Simionati B."/>
            <person name="Cannata N."/>
            <person name="Romualdi C."/>
            <person name="Bartlett D.H."/>
            <person name="Valle G."/>
        </authorList>
    </citation>
    <scope>NUCLEOTIDE SEQUENCE [LARGE SCALE GENOMIC DNA]</scope>
    <source>
        <strain>ATCC BAA-1253 / SS9</strain>
    </source>
</reference>
<accession>Q6LPQ6</accession>
<protein>
    <recommendedName>
        <fullName evidence="1">Asparagine--tRNA ligase</fullName>
        <ecNumber evidence="1">6.1.1.22</ecNumber>
    </recommendedName>
    <alternativeName>
        <fullName evidence="1">Asparaginyl-tRNA synthetase</fullName>
        <shortName evidence="1">AsnRS</shortName>
    </alternativeName>
</protein>
<sequence length="466" mass="52650">MTYAPVTDVLSGKLAVDSEVTVRGWIRSRRDSKAGISFLAIYDGSCFDPIQAVVPNELNNYQEEVLKLTTGCSVEVTGKIVESPAKGQDFELAATEVKVVGLVEDPDTYPMAKTRHSIEYLREVAHLRPRTNIIGAVARVRNCLSQAIHRFYHEQGFFWMSAPLITASDCEGAGEMFRVSTLDMANVPMTDAGEVDYDKDFFGKETFLTVSGQLNAETYACALSKVYTFGPTFRAENSNTSRHLAEFWMVEPEVAFADLDDAAKLAEDMLKYVFKAVLEERRDDLEFFAQRINKEAITRLEQFVTSDFAQVDYTDAIQILQDSGRKFEFDVEWGIDMSSEHERYLAEEHFKAPVVVKNYPKDIKAFYMRMNDDGKTVAAMDVLAPGIGEIIGGSQREERLEHLDKRIAEMGIDASHIEWYRDLRRYGTVPHSGFGLGFERLVTYVTGMQNIRDVIPFPRAPRSANF</sequence>
<evidence type="ECO:0000255" key="1">
    <source>
        <dbReference type="HAMAP-Rule" id="MF_00534"/>
    </source>
</evidence>
<gene>
    <name evidence="1" type="primary">asnS</name>
    <name type="ordered locus">PBPRA2335</name>
</gene>
<organism>
    <name type="scientific">Photobacterium profundum (strain SS9)</name>
    <dbReference type="NCBI Taxonomy" id="298386"/>
    <lineage>
        <taxon>Bacteria</taxon>
        <taxon>Pseudomonadati</taxon>
        <taxon>Pseudomonadota</taxon>
        <taxon>Gammaproteobacteria</taxon>
        <taxon>Vibrionales</taxon>
        <taxon>Vibrionaceae</taxon>
        <taxon>Photobacterium</taxon>
    </lineage>
</organism>